<protein>
    <recommendedName>
        <fullName evidence="1">Integration host factor subunit beta</fullName>
        <shortName evidence="1">IHF-beta</shortName>
    </recommendedName>
</protein>
<feature type="chain" id="PRO_1000060682" description="Integration host factor subunit beta">
    <location>
        <begin position="1"/>
        <end position="94"/>
    </location>
</feature>
<reference key="1">
    <citation type="journal article" date="2004" name="Proc. Natl. Acad. Sci. U.S.A.">
        <title>Insights into the evolution of Yersinia pestis through whole-genome comparison with Yersinia pseudotuberculosis.</title>
        <authorList>
            <person name="Chain P.S.G."/>
            <person name="Carniel E."/>
            <person name="Larimer F.W."/>
            <person name="Lamerdin J."/>
            <person name="Stoutland P.O."/>
            <person name="Regala W.M."/>
            <person name="Georgescu A.M."/>
            <person name="Vergez L.M."/>
            <person name="Land M.L."/>
            <person name="Motin V.L."/>
            <person name="Brubaker R.R."/>
            <person name="Fowler J."/>
            <person name="Hinnebusch J."/>
            <person name="Marceau M."/>
            <person name="Medigue C."/>
            <person name="Simonet M."/>
            <person name="Chenal-Francisque V."/>
            <person name="Souza B."/>
            <person name="Dacheux D."/>
            <person name="Elliott J.M."/>
            <person name="Derbise A."/>
            <person name="Hauser L.J."/>
            <person name="Garcia E."/>
        </authorList>
    </citation>
    <scope>NUCLEOTIDE SEQUENCE [LARGE SCALE GENOMIC DNA]</scope>
    <source>
        <strain>IP32953</strain>
    </source>
</reference>
<comment type="function">
    <text evidence="1">This protein is one of the two subunits of integration host factor, a specific DNA-binding protein that functions in genetic recombination as well as in transcriptional and translational control.</text>
</comment>
<comment type="subunit">
    <text evidence="1">Heterodimer of an alpha and a beta chain.</text>
</comment>
<comment type="similarity">
    <text evidence="1">Belongs to the bacterial histone-like protein family.</text>
</comment>
<dbReference type="EMBL" id="BX936398">
    <property type="protein sequence ID" value="CAH20658.1"/>
    <property type="molecule type" value="Genomic_DNA"/>
</dbReference>
<dbReference type="RefSeq" id="WP_002211322.1">
    <property type="nucleotide sequence ID" value="NZ_CP009712.1"/>
</dbReference>
<dbReference type="SMR" id="Q66CI5"/>
<dbReference type="GeneID" id="96664989"/>
<dbReference type="KEGG" id="ypo:BZ17_1099"/>
<dbReference type="KEGG" id="yps:YPTB1418"/>
<dbReference type="PATRIC" id="fig|273123.14.peg.1167"/>
<dbReference type="Proteomes" id="UP000001011">
    <property type="component" value="Chromosome"/>
</dbReference>
<dbReference type="GO" id="GO:0005694">
    <property type="term" value="C:chromosome"/>
    <property type="evidence" value="ECO:0007669"/>
    <property type="project" value="InterPro"/>
</dbReference>
<dbReference type="GO" id="GO:0005829">
    <property type="term" value="C:cytosol"/>
    <property type="evidence" value="ECO:0007669"/>
    <property type="project" value="TreeGrafter"/>
</dbReference>
<dbReference type="GO" id="GO:0003677">
    <property type="term" value="F:DNA binding"/>
    <property type="evidence" value="ECO:0007669"/>
    <property type="project" value="UniProtKB-UniRule"/>
</dbReference>
<dbReference type="GO" id="GO:0030527">
    <property type="term" value="F:structural constituent of chromatin"/>
    <property type="evidence" value="ECO:0007669"/>
    <property type="project" value="InterPro"/>
</dbReference>
<dbReference type="GO" id="GO:0006310">
    <property type="term" value="P:DNA recombination"/>
    <property type="evidence" value="ECO:0007669"/>
    <property type="project" value="UniProtKB-UniRule"/>
</dbReference>
<dbReference type="GO" id="GO:0006355">
    <property type="term" value="P:regulation of DNA-templated transcription"/>
    <property type="evidence" value="ECO:0007669"/>
    <property type="project" value="UniProtKB-UniRule"/>
</dbReference>
<dbReference type="GO" id="GO:0006417">
    <property type="term" value="P:regulation of translation"/>
    <property type="evidence" value="ECO:0007669"/>
    <property type="project" value="UniProtKB-UniRule"/>
</dbReference>
<dbReference type="CDD" id="cd13836">
    <property type="entry name" value="IHF_B"/>
    <property type="match status" value="1"/>
</dbReference>
<dbReference type="FunFam" id="4.10.520.10:FF:000003">
    <property type="entry name" value="Integration host factor subunit beta"/>
    <property type="match status" value="1"/>
</dbReference>
<dbReference type="Gene3D" id="4.10.520.10">
    <property type="entry name" value="IHF-like DNA-binding proteins"/>
    <property type="match status" value="1"/>
</dbReference>
<dbReference type="HAMAP" id="MF_00381">
    <property type="entry name" value="IHF_beta"/>
    <property type="match status" value="1"/>
</dbReference>
<dbReference type="InterPro" id="IPR000119">
    <property type="entry name" value="Hist_DNA-bd"/>
</dbReference>
<dbReference type="InterPro" id="IPR020816">
    <property type="entry name" value="Histone-like_DNA-bd_CS"/>
</dbReference>
<dbReference type="InterPro" id="IPR010992">
    <property type="entry name" value="IHF-like_DNA-bd_dom_sf"/>
</dbReference>
<dbReference type="InterPro" id="IPR005685">
    <property type="entry name" value="IHF_beta"/>
</dbReference>
<dbReference type="NCBIfam" id="TIGR00988">
    <property type="entry name" value="hip"/>
    <property type="match status" value="1"/>
</dbReference>
<dbReference type="NCBIfam" id="NF001222">
    <property type="entry name" value="PRK00199.1"/>
    <property type="match status" value="1"/>
</dbReference>
<dbReference type="PANTHER" id="PTHR33175">
    <property type="entry name" value="DNA-BINDING PROTEIN HU"/>
    <property type="match status" value="1"/>
</dbReference>
<dbReference type="PANTHER" id="PTHR33175:SF5">
    <property type="entry name" value="INTEGRATION HOST FACTOR SUBUNIT BETA"/>
    <property type="match status" value="1"/>
</dbReference>
<dbReference type="Pfam" id="PF00216">
    <property type="entry name" value="Bac_DNA_binding"/>
    <property type="match status" value="1"/>
</dbReference>
<dbReference type="PRINTS" id="PR01727">
    <property type="entry name" value="DNABINDINGHU"/>
</dbReference>
<dbReference type="SMART" id="SM00411">
    <property type="entry name" value="BHL"/>
    <property type="match status" value="1"/>
</dbReference>
<dbReference type="SUPFAM" id="SSF47729">
    <property type="entry name" value="IHF-like DNA-binding proteins"/>
    <property type="match status" value="1"/>
</dbReference>
<dbReference type="PROSITE" id="PS00045">
    <property type="entry name" value="HISTONE_LIKE"/>
    <property type="match status" value="1"/>
</dbReference>
<gene>
    <name evidence="1" type="primary">ihfB</name>
    <name evidence="1" type="synonym">himD</name>
    <name type="ordered locus">YPTB1418</name>
</gene>
<name>IHFB_YERPS</name>
<evidence type="ECO:0000255" key="1">
    <source>
        <dbReference type="HAMAP-Rule" id="MF_00381"/>
    </source>
</evidence>
<sequence length="94" mass="10560">MTKSELIERLAGQQSHVPAKVVEDAVKEMLEHMAGTLAEGERIEIRGFGSFSLHYRAPRVGRNPKTGDKVELEGKYVPHFKPGKELRDRANIYG</sequence>
<accession>Q66CI5</accession>
<proteinExistence type="inferred from homology"/>
<keyword id="KW-0233">DNA recombination</keyword>
<keyword id="KW-0238">DNA-binding</keyword>
<keyword id="KW-0804">Transcription</keyword>
<keyword id="KW-0805">Transcription regulation</keyword>
<keyword id="KW-0810">Translation regulation</keyword>
<organism>
    <name type="scientific">Yersinia pseudotuberculosis serotype I (strain IP32953)</name>
    <dbReference type="NCBI Taxonomy" id="273123"/>
    <lineage>
        <taxon>Bacteria</taxon>
        <taxon>Pseudomonadati</taxon>
        <taxon>Pseudomonadota</taxon>
        <taxon>Gammaproteobacteria</taxon>
        <taxon>Enterobacterales</taxon>
        <taxon>Yersiniaceae</taxon>
        <taxon>Yersinia</taxon>
    </lineage>
</organism>